<evidence type="ECO:0000255" key="1">
    <source>
        <dbReference type="HAMAP-Rule" id="MF_01077"/>
    </source>
</evidence>
<name>RIMP_SPHAL</name>
<sequence length="181" mass="19542">MVDFDALHAIIAPEAEAMGLALVRVAFFGGDSDPTLQVMAERPDTRQLTIDDCADLSRRISDRLDALEEAGQDPIDVAYRLEVSSPGIDRPLTRPADFADWAGHEAKIALKEKLDGRQRFNGTLVGIDGDVVTISDKEGVEHKLPFGAIDTAKLVLTDKLIAATVPLSAEGADEMEEEGQD</sequence>
<reference key="1">
    <citation type="journal article" date="2009" name="Proc. Natl. Acad. Sci. U.S.A.">
        <title>The genomic basis of trophic strategy in marine bacteria.</title>
        <authorList>
            <person name="Lauro F.M."/>
            <person name="McDougald D."/>
            <person name="Thomas T."/>
            <person name="Williams T.J."/>
            <person name="Egan S."/>
            <person name="Rice S."/>
            <person name="DeMaere M.Z."/>
            <person name="Ting L."/>
            <person name="Ertan H."/>
            <person name="Johnson J."/>
            <person name="Ferriera S."/>
            <person name="Lapidus A."/>
            <person name="Anderson I."/>
            <person name="Kyrpides N."/>
            <person name="Munk A.C."/>
            <person name="Detter C."/>
            <person name="Han C.S."/>
            <person name="Brown M.V."/>
            <person name="Robb F.T."/>
            <person name="Kjelleberg S."/>
            <person name="Cavicchioli R."/>
        </authorList>
    </citation>
    <scope>NUCLEOTIDE SEQUENCE [LARGE SCALE GENOMIC DNA]</scope>
    <source>
        <strain>DSM 13593 / LMG 18877 / RB2256</strain>
    </source>
</reference>
<proteinExistence type="inferred from homology"/>
<gene>
    <name evidence="1" type="primary">rimP</name>
    <name type="ordered locus">Sala_0609</name>
</gene>
<accession>Q1GVJ2</accession>
<comment type="function">
    <text evidence="1">Required for maturation of 30S ribosomal subunits.</text>
</comment>
<comment type="subcellular location">
    <subcellularLocation>
        <location evidence="1">Cytoplasm</location>
    </subcellularLocation>
</comment>
<comment type="similarity">
    <text evidence="1">Belongs to the RimP family.</text>
</comment>
<protein>
    <recommendedName>
        <fullName evidence="1">Ribosome maturation factor RimP</fullName>
    </recommendedName>
</protein>
<feature type="chain" id="PRO_0000384779" description="Ribosome maturation factor RimP">
    <location>
        <begin position="1"/>
        <end position="181"/>
    </location>
</feature>
<keyword id="KW-0963">Cytoplasm</keyword>
<keyword id="KW-1185">Reference proteome</keyword>
<keyword id="KW-0690">Ribosome biogenesis</keyword>
<dbReference type="EMBL" id="CP000356">
    <property type="protein sequence ID" value="ABF52330.1"/>
    <property type="molecule type" value="Genomic_DNA"/>
</dbReference>
<dbReference type="RefSeq" id="WP_011540920.1">
    <property type="nucleotide sequence ID" value="NC_008048.1"/>
</dbReference>
<dbReference type="SMR" id="Q1GVJ2"/>
<dbReference type="STRING" id="317655.Sala_0609"/>
<dbReference type="KEGG" id="sal:Sala_0609"/>
<dbReference type="eggNOG" id="COG0779">
    <property type="taxonomic scope" value="Bacteria"/>
</dbReference>
<dbReference type="HOGENOM" id="CLU_070525_1_1_5"/>
<dbReference type="OrthoDB" id="9805006at2"/>
<dbReference type="Proteomes" id="UP000006578">
    <property type="component" value="Chromosome"/>
</dbReference>
<dbReference type="GO" id="GO:0005829">
    <property type="term" value="C:cytosol"/>
    <property type="evidence" value="ECO:0007669"/>
    <property type="project" value="TreeGrafter"/>
</dbReference>
<dbReference type="GO" id="GO:0000028">
    <property type="term" value="P:ribosomal small subunit assembly"/>
    <property type="evidence" value="ECO:0007669"/>
    <property type="project" value="TreeGrafter"/>
</dbReference>
<dbReference type="GO" id="GO:0006412">
    <property type="term" value="P:translation"/>
    <property type="evidence" value="ECO:0007669"/>
    <property type="project" value="TreeGrafter"/>
</dbReference>
<dbReference type="CDD" id="cd01734">
    <property type="entry name" value="YlxS_C"/>
    <property type="match status" value="1"/>
</dbReference>
<dbReference type="Gene3D" id="2.30.30.180">
    <property type="entry name" value="Ribosome maturation factor RimP, C-terminal domain"/>
    <property type="match status" value="1"/>
</dbReference>
<dbReference type="Gene3D" id="3.30.300.70">
    <property type="entry name" value="RimP-like superfamily, N-terminal"/>
    <property type="match status" value="1"/>
</dbReference>
<dbReference type="HAMAP" id="MF_01077">
    <property type="entry name" value="RimP"/>
    <property type="match status" value="1"/>
</dbReference>
<dbReference type="InterPro" id="IPR003728">
    <property type="entry name" value="Ribosome_maturation_RimP"/>
</dbReference>
<dbReference type="InterPro" id="IPR028998">
    <property type="entry name" value="RimP_C"/>
</dbReference>
<dbReference type="InterPro" id="IPR036847">
    <property type="entry name" value="RimP_C_sf"/>
</dbReference>
<dbReference type="InterPro" id="IPR028989">
    <property type="entry name" value="RimP_N"/>
</dbReference>
<dbReference type="InterPro" id="IPR035956">
    <property type="entry name" value="RimP_N_sf"/>
</dbReference>
<dbReference type="NCBIfam" id="NF011229">
    <property type="entry name" value="PRK14636.1"/>
    <property type="match status" value="1"/>
</dbReference>
<dbReference type="PANTHER" id="PTHR33867">
    <property type="entry name" value="RIBOSOME MATURATION FACTOR RIMP"/>
    <property type="match status" value="1"/>
</dbReference>
<dbReference type="PANTHER" id="PTHR33867:SF1">
    <property type="entry name" value="RIBOSOME MATURATION FACTOR RIMP"/>
    <property type="match status" value="1"/>
</dbReference>
<dbReference type="Pfam" id="PF17384">
    <property type="entry name" value="DUF150_C"/>
    <property type="match status" value="1"/>
</dbReference>
<dbReference type="Pfam" id="PF02576">
    <property type="entry name" value="RimP_N"/>
    <property type="match status" value="1"/>
</dbReference>
<dbReference type="SUPFAM" id="SSF74942">
    <property type="entry name" value="YhbC-like, C-terminal domain"/>
    <property type="match status" value="1"/>
</dbReference>
<dbReference type="SUPFAM" id="SSF75420">
    <property type="entry name" value="YhbC-like, N-terminal domain"/>
    <property type="match status" value="1"/>
</dbReference>
<organism>
    <name type="scientific">Sphingopyxis alaskensis (strain DSM 13593 / LMG 18877 / RB2256)</name>
    <name type="common">Sphingomonas alaskensis</name>
    <dbReference type="NCBI Taxonomy" id="317655"/>
    <lineage>
        <taxon>Bacteria</taxon>
        <taxon>Pseudomonadati</taxon>
        <taxon>Pseudomonadota</taxon>
        <taxon>Alphaproteobacteria</taxon>
        <taxon>Sphingomonadales</taxon>
        <taxon>Sphingomonadaceae</taxon>
        <taxon>Sphingopyxis</taxon>
    </lineage>
</organism>